<sequence length="394" mass="43335">MAKAKFERIKPHVNVGTIGHVDHGKTTLTAAISHVLAKTYGGEAKDFSQIDNAPEERERGITINTSHIEYDTPSRHYAHVDCPGHADYVKNMITGAAQMDGAILVVASTDGPMPQTREHILLSRQVGVPYIIVFMNKCDMVDDEELLELVEMEVRELLSEYDFPGDDLPVIQGSALKALEGQPEWEAKIIELANALDSYIPEPQRDIDKPFLLPIEDVFSISGRGTVVTGRVERGIVKVGDEVEIVGVRTTTKTTCTGVEMFRKLLDEGRAGENCGVLLRGTKRDDVERGQVLAKPGSINPHTTFESEVYVLSKEEGGRHTPFFKGYRPQFYFRTTDVTGTIELPEGVEMVMPGDNIKMVVTLICPIAMDEGLRFAIREGGRTVGAGVVAKIIA</sequence>
<keyword id="KW-0963">Cytoplasm</keyword>
<keyword id="KW-0251">Elongation factor</keyword>
<keyword id="KW-0342">GTP-binding</keyword>
<keyword id="KW-0378">Hydrolase</keyword>
<keyword id="KW-0460">Magnesium</keyword>
<keyword id="KW-0479">Metal-binding</keyword>
<keyword id="KW-0547">Nucleotide-binding</keyword>
<keyword id="KW-0648">Protein biosynthesis</keyword>
<feature type="chain" id="PRO_0000337523" description="Elongation factor Tu 2">
    <location>
        <begin position="1"/>
        <end position="394"/>
    </location>
</feature>
<feature type="domain" description="tr-type G">
    <location>
        <begin position="10"/>
        <end position="204"/>
    </location>
</feature>
<feature type="region of interest" description="G1" evidence="1">
    <location>
        <begin position="19"/>
        <end position="26"/>
    </location>
</feature>
<feature type="region of interest" description="G2" evidence="1">
    <location>
        <begin position="60"/>
        <end position="64"/>
    </location>
</feature>
<feature type="region of interest" description="G3" evidence="1">
    <location>
        <begin position="81"/>
        <end position="84"/>
    </location>
</feature>
<feature type="region of interest" description="G4" evidence="1">
    <location>
        <begin position="136"/>
        <end position="139"/>
    </location>
</feature>
<feature type="region of interest" description="G5" evidence="1">
    <location>
        <begin position="174"/>
        <end position="176"/>
    </location>
</feature>
<feature type="binding site" evidence="2">
    <location>
        <begin position="19"/>
        <end position="26"/>
    </location>
    <ligand>
        <name>GTP</name>
        <dbReference type="ChEBI" id="CHEBI:37565"/>
    </ligand>
</feature>
<feature type="binding site" evidence="2">
    <location>
        <position position="26"/>
    </location>
    <ligand>
        <name>Mg(2+)</name>
        <dbReference type="ChEBI" id="CHEBI:18420"/>
    </ligand>
</feature>
<feature type="binding site" evidence="2">
    <location>
        <begin position="81"/>
        <end position="85"/>
    </location>
    <ligand>
        <name>GTP</name>
        <dbReference type="ChEBI" id="CHEBI:37565"/>
    </ligand>
</feature>
<feature type="binding site" evidence="2">
    <location>
        <begin position="136"/>
        <end position="139"/>
    </location>
    <ligand>
        <name>GTP</name>
        <dbReference type="ChEBI" id="CHEBI:37565"/>
    </ligand>
</feature>
<name>EFTU2_SHEB9</name>
<organism>
    <name type="scientific">Shewanella baltica (strain OS195)</name>
    <dbReference type="NCBI Taxonomy" id="399599"/>
    <lineage>
        <taxon>Bacteria</taxon>
        <taxon>Pseudomonadati</taxon>
        <taxon>Pseudomonadota</taxon>
        <taxon>Gammaproteobacteria</taxon>
        <taxon>Alteromonadales</taxon>
        <taxon>Shewanellaceae</taxon>
        <taxon>Shewanella</taxon>
    </lineage>
</organism>
<accession>A9KWA0</accession>
<proteinExistence type="inferred from homology"/>
<gene>
    <name evidence="2" type="primary">tuf2</name>
    <name type="ordered locus">Sbal195_0198</name>
</gene>
<comment type="function">
    <text evidence="2">GTP hydrolase that promotes the GTP-dependent binding of aminoacyl-tRNA to the A-site of ribosomes during protein biosynthesis.</text>
</comment>
<comment type="catalytic activity">
    <reaction evidence="2">
        <text>GTP + H2O = GDP + phosphate + H(+)</text>
        <dbReference type="Rhea" id="RHEA:19669"/>
        <dbReference type="ChEBI" id="CHEBI:15377"/>
        <dbReference type="ChEBI" id="CHEBI:15378"/>
        <dbReference type="ChEBI" id="CHEBI:37565"/>
        <dbReference type="ChEBI" id="CHEBI:43474"/>
        <dbReference type="ChEBI" id="CHEBI:58189"/>
        <dbReference type="EC" id="3.6.5.3"/>
    </reaction>
    <physiologicalReaction direction="left-to-right" evidence="2">
        <dbReference type="Rhea" id="RHEA:19670"/>
    </physiologicalReaction>
</comment>
<comment type="subunit">
    <text evidence="2">Monomer.</text>
</comment>
<comment type="subcellular location">
    <subcellularLocation>
        <location evidence="2">Cytoplasm</location>
    </subcellularLocation>
</comment>
<comment type="similarity">
    <text evidence="2">Belongs to the TRAFAC class translation factor GTPase superfamily. Classic translation factor GTPase family. EF-Tu/EF-1A subfamily.</text>
</comment>
<dbReference type="EC" id="3.6.5.3" evidence="2"/>
<dbReference type="EMBL" id="CP000891">
    <property type="protein sequence ID" value="ABX47380.1"/>
    <property type="molecule type" value="Genomic_DNA"/>
</dbReference>
<dbReference type="SMR" id="A9KWA0"/>
<dbReference type="KEGG" id="sbn:Sbal195_0198"/>
<dbReference type="HOGENOM" id="CLU_007265_0_1_6"/>
<dbReference type="Proteomes" id="UP000000770">
    <property type="component" value="Chromosome"/>
</dbReference>
<dbReference type="GO" id="GO:0005829">
    <property type="term" value="C:cytosol"/>
    <property type="evidence" value="ECO:0007669"/>
    <property type="project" value="TreeGrafter"/>
</dbReference>
<dbReference type="GO" id="GO:0005525">
    <property type="term" value="F:GTP binding"/>
    <property type="evidence" value="ECO:0007669"/>
    <property type="project" value="UniProtKB-UniRule"/>
</dbReference>
<dbReference type="GO" id="GO:0003924">
    <property type="term" value="F:GTPase activity"/>
    <property type="evidence" value="ECO:0007669"/>
    <property type="project" value="InterPro"/>
</dbReference>
<dbReference type="GO" id="GO:0097216">
    <property type="term" value="F:guanosine tetraphosphate binding"/>
    <property type="evidence" value="ECO:0007669"/>
    <property type="project" value="UniProtKB-ARBA"/>
</dbReference>
<dbReference type="GO" id="GO:0003746">
    <property type="term" value="F:translation elongation factor activity"/>
    <property type="evidence" value="ECO:0007669"/>
    <property type="project" value="UniProtKB-UniRule"/>
</dbReference>
<dbReference type="CDD" id="cd01884">
    <property type="entry name" value="EF_Tu"/>
    <property type="match status" value="1"/>
</dbReference>
<dbReference type="CDD" id="cd03697">
    <property type="entry name" value="EFTU_II"/>
    <property type="match status" value="1"/>
</dbReference>
<dbReference type="CDD" id="cd03707">
    <property type="entry name" value="EFTU_III"/>
    <property type="match status" value="1"/>
</dbReference>
<dbReference type="FunFam" id="2.40.30.10:FF:000001">
    <property type="entry name" value="Elongation factor Tu"/>
    <property type="match status" value="1"/>
</dbReference>
<dbReference type="FunFam" id="3.40.50.300:FF:000003">
    <property type="entry name" value="Elongation factor Tu"/>
    <property type="match status" value="1"/>
</dbReference>
<dbReference type="Gene3D" id="3.40.50.300">
    <property type="entry name" value="P-loop containing nucleotide triphosphate hydrolases"/>
    <property type="match status" value="1"/>
</dbReference>
<dbReference type="Gene3D" id="2.40.30.10">
    <property type="entry name" value="Translation factors"/>
    <property type="match status" value="2"/>
</dbReference>
<dbReference type="HAMAP" id="MF_00118_B">
    <property type="entry name" value="EF_Tu_B"/>
    <property type="match status" value="1"/>
</dbReference>
<dbReference type="InterPro" id="IPR041709">
    <property type="entry name" value="EF-Tu_GTP-bd"/>
</dbReference>
<dbReference type="InterPro" id="IPR050055">
    <property type="entry name" value="EF-Tu_GTPase"/>
</dbReference>
<dbReference type="InterPro" id="IPR004161">
    <property type="entry name" value="EFTu-like_2"/>
</dbReference>
<dbReference type="InterPro" id="IPR033720">
    <property type="entry name" value="EFTU_2"/>
</dbReference>
<dbReference type="InterPro" id="IPR031157">
    <property type="entry name" value="G_TR_CS"/>
</dbReference>
<dbReference type="InterPro" id="IPR027417">
    <property type="entry name" value="P-loop_NTPase"/>
</dbReference>
<dbReference type="InterPro" id="IPR005225">
    <property type="entry name" value="Small_GTP-bd"/>
</dbReference>
<dbReference type="InterPro" id="IPR000795">
    <property type="entry name" value="T_Tr_GTP-bd_dom"/>
</dbReference>
<dbReference type="InterPro" id="IPR009000">
    <property type="entry name" value="Transl_B-barrel_sf"/>
</dbReference>
<dbReference type="InterPro" id="IPR009001">
    <property type="entry name" value="Transl_elong_EF1A/Init_IF2_C"/>
</dbReference>
<dbReference type="InterPro" id="IPR004541">
    <property type="entry name" value="Transl_elong_EFTu/EF1A_bac/org"/>
</dbReference>
<dbReference type="InterPro" id="IPR004160">
    <property type="entry name" value="Transl_elong_EFTu/EF1A_C"/>
</dbReference>
<dbReference type="NCBIfam" id="TIGR00485">
    <property type="entry name" value="EF-Tu"/>
    <property type="match status" value="1"/>
</dbReference>
<dbReference type="NCBIfam" id="NF000766">
    <property type="entry name" value="PRK00049.1"/>
    <property type="match status" value="1"/>
</dbReference>
<dbReference type="NCBIfam" id="NF009372">
    <property type="entry name" value="PRK12735.1"/>
    <property type="match status" value="1"/>
</dbReference>
<dbReference type="NCBIfam" id="NF009373">
    <property type="entry name" value="PRK12736.1"/>
    <property type="match status" value="1"/>
</dbReference>
<dbReference type="NCBIfam" id="TIGR00231">
    <property type="entry name" value="small_GTP"/>
    <property type="match status" value="1"/>
</dbReference>
<dbReference type="PANTHER" id="PTHR43721:SF22">
    <property type="entry name" value="ELONGATION FACTOR TU, MITOCHONDRIAL"/>
    <property type="match status" value="1"/>
</dbReference>
<dbReference type="PANTHER" id="PTHR43721">
    <property type="entry name" value="ELONGATION FACTOR TU-RELATED"/>
    <property type="match status" value="1"/>
</dbReference>
<dbReference type="Pfam" id="PF00009">
    <property type="entry name" value="GTP_EFTU"/>
    <property type="match status" value="1"/>
</dbReference>
<dbReference type="Pfam" id="PF03144">
    <property type="entry name" value="GTP_EFTU_D2"/>
    <property type="match status" value="1"/>
</dbReference>
<dbReference type="Pfam" id="PF03143">
    <property type="entry name" value="GTP_EFTU_D3"/>
    <property type="match status" value="1"/>
</dbReference>
<dbReference type="PRINTS" id="PR00315">
    <property type="entry name" value="ELONGATNFCT"/>
</dbReference>
<dbReference type="SUPFAM" id="SSF50465">
    <property type="entry name" value="EF-Tu/eEF-1alpha/eIF2-gamma C-terminal domain"/>
    <property type="match status" value="1"/>
</dbReference>
<dbReference type="SUPFAM" id="SSF52540">
    <property type="entry name" value="P-loop containing nucleoside triphosphate hydrolases"/>
    <property type="match status" value="1"/>
</dbReference>
<dbReference type="SUPFAM" id="SSF50447">
    <property type="entry name" value="Translation proteins"/>
    <property type="match status" value="1"/>
</dbReference>
<dbReference type="PROSITE" id="PS00301">
    <property type="entry name" value="G_TR_1"/>
    <property type="match status" value="1"/>
</dbReference>
<dbReference type="PROSITE" id="PS51722">
    <property type="entry name" value="G_TR_2"/>
    <property type="match status" value="1"/>
</dbReference>
<protein>
    <recommendedName>
        <fullName evidence="2">Elongation factor Tu 2</fullName>
        <shortName evidence="2">EF-Tu 2</shortName>
        <ecNumber evidence="2">3.6.5.3</ecNumber>
    </recommendedName>
</protein>
<reference key="1">
    <citation type="submission" date="2007-11" db="EMBL/GenBank/DDBJ databases">
        <title>Complete sequence of chromosome of Shewanella baltica OS195.</title>
        <authorList>
            <consortium name="US DOE Joint Genome Institute"/>
            <person name="Copeland A."/>
            <person name="Lucas S."/>
            <person name="Lapidus A."/>
            <person name="Barry K."/>
            <person name="Glavina del Rio T."/>
            <person name="Dalin E."/>
            <person name="Tice H."/>
            <person name="Pitluck S."/>
            <person name="Chain P."/>
            <person name="Malfatti S."/>
            <person name="Shin M."/>
            <person name="Vergez L."/>
            <person name="Schmutz J."/>
            <person name="Larimer F."/>
            <person name="Land M."/>
            <person name="Hauser L."/>
            <person name="Kyrpides N."/>
            <person name="Kim E."/>
            <person name="Brettar I."/>
            <person name="Rodrigues J."/>
            <person name="Konstantinidis K."/>
            <person name="Klappenbach J."/>
            <person name="Hofle M."/>
            <person name="Tiedje J."/>
            <person name="Richardson P."/>
        </authorList>
    </citation>
    <scope>NUCLEOTIDE SEQUENCE [LARGE SCALE GENOMIC DNA]</scope>
    <source>
        <strain>OS195</strain>
    </source>
</reference>
<evidence type="ECO:0000250" key="1"/>
<evidence type="ECO:0000255" key="2">
    <source>
        <dbReference type="HAMAP-Rule" id="MF_00118"/>
    </source>
</evidence>